<reference key="1">
    <citation type="journal article" date="2011" name="Science">
        <title>Comparative functional genomics of the fission yeasts.</title>
        <authorList>
            <person name="Rhind N."/>
            <person name="Chen Z."/>
            <person name="Yassour M."/>
            <person name="Thompson D.A."/>
            <person name="Haas B.J."/>
            <person name="Habib N."/>
            <person name="Wapinski I."/>
            <person name="Roy S."/>
            <person name="Lin M.F."/>
            <person name="Heiman D.I."/>
            <person name="Young S.K."/>
            <person name="Furuya K."/>
            <person name="Guo Y."/>
            <person name="Pidoux A."/>
            <person name="Chen H.M."/>
            <person name="Robbertse B."/>
            <person name="Goldberg J.M."/>
            <person name="Aoki K."/>
            <person name="Bayne E.H."/>
            <person name="Berlin A.M."/>
            <person name="Desjardins C.A."/>
            <person name="Dobbs E."/>
            <person name="Dukaj L."/>
            <person name="Fan L."/>
            <person name="FitzGerald M.G."/>
            <person name="French C."/>
            <person name="Gujja S."/>
            <person name="Hansen K."/>
            <person name="Keifenheim D."/>
            <person name="Levin J.Z."/>
            <person name="Mosher R.A."/>
            <person name="Mueller C.A."/>
            <person name="Pfiffner J."/>
            <person name="Priest M."/>
            <person name="Russ C."/>
            <person name="Smialowska A."/>
            <person name="Swoboda P."/>
            <person name="Sykes S.M."/>
            <person name="Vaughn M."/>
            <person name="Vengrova S."/>
            <person name="Yoder R."/>
            <person name="Zeng Q."/>
            <person name="Allshire R."/>
            <person name="Baulcombe D."/>
            <person name="Birren B.W."/>
            <person name="Brown W."/>
            <person name="Ekwall K."/>
            <person name="Kellis M."/>
            <person name="Leatherwood J."/>
            <person name="Levin H."/>
            <person name="Margalit H."/>
            <person name="Martienssen R."/>
            <person name="Nieduszynski C.A."/>
            <person name="Spatafora J.W."/>
            <person name="Friedman N."/>
            <person name="Dalgaard J.Z."/>
            <person name="Baumann P."/>
            <person name="Niki H."/>
            <person name="Regev A."/>
            <person name="Nusbaum C."/>
        </authorList>
    </citation>
    <scope>NUCLEOTIDE SEQUENCE [LARGE SCALE GENOMIC DNA]</scope>
    <source>
        <strain>yFS275 / FY16936</strain>
    </source>
</reference>
<comment type="function">
    <text evidence="1">N-acetylglutamate synthase involved in arginine biosynthesis.</text>
</comment>
<comment type="catalytic activity">
    <reaction>
        <text>L-glutamate + acetyl-CoA = N-acetyl-L-glutamate + CoA + H(+)</text>
        <dbReference type="Rhea" id="RHEA:24292"/>
        <dbReference type="ChEBI" id="CHEBI:15378"/>
        <dbReference type="ChEBI" id="CHEBI:29985"/>
        <dbReference type="ChEBI" id="CHEBI:44337"/>
        <dbReference type="ChEBI" id="CHEBI:57287"/>
        <dbReference type="ChEBI" id="CHEBI:57288"/>
        <dbReference type="EC" id="2.3.1.1"/>
    </reaction>
</comment>
<comment type="pathway">
    <text>Amino-acid biosynthesis; L-arginine biosynthesis; N(2)-acetyl-L-ornithine from L-glutamate: step 1/4.</text>
</comment>
<comment type="subcellular location">
    <subcellularLocation>
        <location evidence="1">Mitochondrion</location>
    </subcellularLocation>
</comment>
<comment type="similarity">
    <text evidence="4">Belongs to the acetyltransferase family.</text>
</comment>
<sequence>MTPKSAALVDDLVSILKSVQTKRSAKGFLKKLFPQPNEDATPSSTHQAPPVRLAVTKLAGVETIADDTLFGIGKTIQRMSRLGMQSIIVPSMSTPTGLSACFASGKCASLAQVNELREQLRTQELSQLDRVSDILCQAGVLARPSYGTLYASNADGVSLEAQRLLLETLQNGYTSVIGNSVVNPGLCLTQITPDQVVLGVVRSFAQMKSNVSVERLIVIDEVGGMPCPRRSHGSSHVLINLAQEYVSLWPTLSPKHAENLQLVNSCLDLLPHSAAAIVTTPDAAVFNGSTRQSHPIIHNILTDRTVFSCSLPVDRSPETKTTLLRRGTPIYMYHGTDCLTNGSVSWDRIWYLLNDSFQRVFDMPRYLERIRHNLALVIVAGDYEGVAIITLEQPQTPGAAPVPYLDKLAVLQKVQGTSAIADFVFNAMCSVFSQEIVWRSRLDNPVNKWYFERSRGSLLSRSTPWRLFWTGYKSADQKRIQEYLDVIDSIQPTWIK</sequence>
<evidence type="ECO:0000250" key="1"/>
<evidence type="ECO:0000255" key="2"/>
<evidence type="ECO:0000255" key="3">
    <source>
        <dbReference type="PROSITE-ProRule" id="PRU00532"/>
    </source>
</evidence>
<evidence type="ECO:0000305" key="4"/>
<proteinExistence type="inferred from homology"/>
<organism>
    <name type="scientific">Schizosaccharomyces japonicus (strain yFS275 / FY16936)</name>
    <name type="common">Fission yeast</name>
    <dbReference type="NCBI Taxonomy" id="402676"/>
    <lineage>
        <taxon>Eukaryota</taxon>
        <taxon>Fungi</taxon>
        <taxon>Dikarya</taxon>
        <taxon>Ascomycota</taxon>
        <taxon>Taphrinomycotina</taxon>
        <taxon>Schizosaccharomycetes</taxon>
        <taxon>Schizosaccharomycetales</taxon>
        <taxon>Schizosaccharomycetaceae</taxon>
        <taxon>Schizosaccharomyces</taxon>
    </lineage>
</organism>
<name>NAGS_SCHJY</name>
<gene>
    <name type="primary">arg2</name>
    <name type="ORF">SJAG_00695</name>
</gene>
<keyword id="KW-0012">Acyltransferase</keyword>
<keyword id="KW-0028">Amino-acid biosynthesis</keyword>
<keyword id="KW-0496">Mitochondrion</keyword>
<keyword id="KW-1185">Reference proteome</keyword>
<keyword id="KW-0808">Transferase</keyword>
<keyword id="KW-0809">Transit peptide</keyword>
<protein>
    <recommendedName>
        <fullName>Amino-acid acetyltransferase, mitochondrial</fullName>
        <ecNumber>2.3.1.1</ecNumber>
    </recommendedName>
    <alternativeName>
        <fullName>Arginine-requiring protein 2</fullName>
    </alternativeName>
    <alternativeName>
        <fullName>Glutamate N-acetyltransferase</fullName>
    </alternativeName>
    <alternativeName>
        <fullName>N-acetylglutamate synthase</fullName>
        <shortName>AGS</shortName>
        <shortName>NAGS</shortName>
    </alternativeName>
</protein>
<feature type="transit peptide" description="Mitochondrion" evidence="2">
    <location>
        <begin position="1"/>
        <end status="unknown"/>
    </location>
</feature>
<feature type="chain" id="PRO_0000372578" description="Amino-acid acetyltransferase, mitochondrial">
    <location>
        <begin status="unknown"/>
        <end position="496"/>
    </location>
</feature>
<feature type="domain" description="N-acetyltransferase" evidence="3">
    <location>
        <begin position="333"/>
        <end position="493"/>
    </location>
</feature>
<dbReference type="EC" id="2.3.1.1"/>
<dbReference type="EMBL" id="KE651166">
    <property type="protein sequence ID" value="EEB05672.1"/>
    <property type="molecule type" value="Genomic_DNA"/>
</dbReference>
<dbReference type="RefSeq" id="XP_002171965.1">
    <property type="nucleotide sequence ID" value="XM_002171929.1"/>
</dbReference>
<dbReference type="SMR" id="B6JWC1"/>
<dbReference type="STRING" id="402676.B6JWC1"/>
<dbReference type="EnsemblFungi" id="EEB05672">
    <property type="protein sequence ID" value="EEB05672"/>
    <property type="gene ID" value="SJAG_00695"/>
</dbReference>
<dbReference type="GeneID" id="7052113"/>
<dbReference type="JaponicusDB" id="SJAG_00695">
    <property type="gene designation" value="arg6"/>
</dbReference>
<dbReference type="VEuPathDB" id="FungiDB:SJAG_00695"/>
<dbReference type="eggNOG" id="KOG2436">
    <property type="taxonomic scope" value="Eukaryota"/>
</dbReference>
<dbReference type="HOGENOM" id="CLU_013088_0_0_1"/>
<dbReference type="OMA" id="PKELIWR"/>
<dbReference type="OrthoDB" id="5585968at2759"/>
<dbReference type="UniPathway" id="UPA00068">
    <property type="reaction ID" value="UER00106"/>
</dbReference>
<dbReference type="Proteomes" id="UP000001744">
    <property type="component" value="Unassembled WGS sequence"/>
</dbReference>
<dbReference type="GO" id="GO:0005759">
    <property type="term" value="C:mitochondrial matrix"/>
    <property type="evidence" value="ECO:0000318"/>
    <property type="project" value="GO_Central"/>
</dbReference>
<dbReference type="GO" id="GO:0004042">
    <property type="term" value="F:L-glutamate N-acetyltransferase activity"/>
    <property type="evidence" value="ECO:0000318"/>
    <property type="project" value="GO_Central"/>
</dbReference>
<dbReference type="GO" id="GO:0006526">
    <property type="term" value="P:L-arginine biosynthetic process"/>
    <property type="evidence" value="ECO:0000318"/>
    <property type="project" value="GO_Central"/>
</dbReference>
<dbReference type="GO" id="GO:0006592">
    <property type="term" value="P:ornithine biosynthetic process"/>
    <property type="evidence" value="ECO:0000318"/>
    <property type="project" value="GO_Central"/>
</dbReference>
<dbReference type="Gene3D" id="3.40.630.30">
    <property type="match status" value="1"/>
</dbReference>
<dbReference type="InterPro" id="IPR011190">
    <property type="entry name" value="GlcNAc_Synth_fun"/>
</dbReference>
<dbReference type="InterPro" id="IPR006855">
    <property type="entry name" value="Vertebrate-like_GNAT_dom"/>
</dbReference>
<dbReference type="PANTHER" id="PTHR23342:SF4">
    <property type="entry name" value="AMINO-ACID ACETYLTRANSFERASE, MITOCHONDRIAL"/>
    <property type="match status" value="1"/>
</dbReference>
<dbReference type="PANTHER" id="PTHR23342">
    <property type="entry name" value="N-ACETYLGLUTAMATE SYNTHASE"/>
    <property type="match status" value="1"/>
</dbReference>
<dbReference type="Pfam" id="PF04768">
    <property type="entry name" value="NAT"/>
    <property type="match status" value="1"/>
</dbReference>
<dbReference type="PIRSF" id="PIRSF007892">
    <property type="entry name" value="NAGS_fungal"/>
    <property type="match status" value="1"/>
</dbReference>
<dbReference type="PROSITE" id="PS51731">
    <property type="entry name" value="GNAT_NAGS"/>
    <property type="match status" value="1"/>
</dbReference>
<accession>B6JWC1</accession>